<evidence type="ECO:0000255" key="1">
    <source>
        <dbReference type="HAMAP-Rule" id="MF_01351"/>
    </source>
</evidence>
<feature type="chain" id="PRO_0000298546" description="NADH-quinone oxidoreductase subunit I">
    <location>
        <begin position="1"/>
        <end position="163"/>
    </location>
</feature>
<feature type="domain" description="4Fe-4S ferredoxin-type 1" evidence="1">
    <location>
        <begin position="54"/>
        <end position="84"/>
    </location>
</feature>
<feature type="domain" description="4Fe-4S ferredoxin-type 2" evidence="1">
    <location>
        <begin position="94"/>
        <end position="123"/>
    </location>
</feature>
<feature type="binding site" evidence="1">
    <location>
        <position position="64"/>
    </location>
    <ligand>
        <name>[4Fe-4S] cluster</name>
        <dbReference type="ChEBI" id="CHEBI:49883"/>
        <label>1</label>
    </ligand>
</feature>
<feature type="binding site" evidence="1">
    <location>
        <position position="67"/>
    </location>
    <ligand>
        <name>[4Fe-4S] cluster</name>
        <dbReference type="ChEBI" id="CHEBI:49883"/>
        <label>1</label>
    </ligand>
</feature>
<feature type="binding site" evidence="1">
    <location>
        <position position="70"/>
    </location>
    <ligand>
        <name>[4Fe-4S] cluster</name>
        <dbReference type="ChEBI" id="CHEBI:49883"/>
        <label>1</label>
    </ligand>
</feature>
<feature type="binding site" evidence="1">
    <location>
        <position position="74"/>
    </location>
    <ligand>
        <name>[4Fe-4S] cluster</name>
        <dbReference type="ChEBI" id="CHEBI:49883"/>
        <label>2</label>
    </ligand>
</feature>
<feature type="binding site" evidence="1">
    <location>
        <position position="103"/>
    </location>
    <ligand>
        <name>[4Fe-4S] cluster</name>
        <dbReference type="ChEBI" id="CHEBI:49883"/>
        <label>2</label>
    </ligand>
</feature>
<feature type="binding site" evidence="1">
    <location>
        <position position="106"/>
    </location>
    <ligand>
        <name>[4Fe-4S] cluster</name>
        <dbReference type="ChEBI" id="CHEBI:49883"/>
        <label>2</label>
    </ligand>
</feature>
<feature type="binding site" evidence="1">
    <location>
        <position position="109"/>
    </location>
    <ligand>
        <name>[4Fe-4S] cluster</name>
        <dbReference type="ChEBI" id="CHEBI:49883"/>
        <label>2</label>
    </ligand>
</feature>
<feature type="binding site" evidence="1">
    <location>
        <position position="113"/>
    </location>
    <ligand>
        <name>[4Fe-4S] cluster</name>
        <dbReference type="ChEBI" id="CHEBI:49883"/>
        <label>1</label>
    </ligand>
</feature>
<comment type="function">
    <text evidence="1">NDH-1 shuttles electrons from NADH, via FMN and iron-sulfur (Fe-S) centers, to quinones in the respiratory chain. The immediate electron acceptor for the enzyme in this species is believed to be ubiquinone. Couples the redox reaction to proton translocation (for every two electrons transferred, four hydrogen ions are translocated across the cytoplasmic membrane), and thus conserves the redox energy in a proton gradient.</text>
</comment>
<comment type="catalytic activity">
    <reaction evidence="1">
        <text>a quinone + NADH + 5 H(+)(in) = a quinol + NAD(+) + 4 H(+)(out)</text>
        <dbReference type="Rhea" id="RHEA:57888"/>
        <dbReference type="ChEBI" id="CHEBI:15378"/>
        <dbReference type="ChEBI" id="CHEBI:24646"/>
        <dbReference type="ChEBI" id="CHEBI:57540"/>
        <dbReference type="ChEBI" id="CHEBI:57945"/>
        <dbReference type="ChEBI" id="CHEBI:132124"/>
    </reaction>
</comment>
<comment type="cofactor">
    <cofactor evidence="1">
        <name>[4Fe-4S] cluster</name>
        <dbReference type="ChEBI" id="CHEBI:49883"/>
    </cofactor>
    <text evidence="1">Binds 2 [4Fe-4S] clusters per subunit.</text>
</comment>
<comment type="subunit">
    <text evidence="1">NDH-1 is composed of 14 different subunits. Subunits NuoA, H, J, K, L, M, N constitute the membrane sector of the complex.</text>
</comment>
<comment type="subcellular location">
    <subcellularLocation>
        <location evidence="1">Cell inner membrane</location>
        <topology evidence="1">Peripheral membrane protein</topology>
    </subcellularLocation>
</comment>
<comment type="similarity">
    <text evidence="1">Belongs to the complex I 23 kDa subunit family.</text>
</comment>
<organism>
    <name type="scientific">Ruthia magnifica subsp. Calyptogena magnifica</name>
    <dbReference type="NCBI Taxonomy" id="413404"/>
    <lineage>
        <taxon>Bacteria</taxon>
        <taxon>Pseudomonadati</taxon>
        <taxon>Pseudomonadota</taxon>
        <taxon>Gammaproteobacteria</taxon>
        <taxon>Candidatus Pseudothioglobaceae</taxon>
        <taxon>Candidatus Ruthturnera</taxon>
    </lineage>
</organism>
<dbReference type="EC" id="7.1.1.-" evidence="1"/>
<dbReference type="EMBL" id="CP000488">
    <property type="protein sequence ID" value="ABL02027.1"/>
    <property type="molecule type" value="Genomic_DNA"/>
</dbReference>
<dbReference type="RefSeq" id="WP_011737652.1">
    <property type="nucleotide sequence ID" value="NC_008610.1"/>
</dbReference>
<dbReference type="SMR" id="A1AVS0"/>
<dbReference type="STRING" id="413404.Rmag_0245"/>
<dbReference type="KEGG" id="rma:Rmag_0245"/>
<dbReference type="eggNOG" id="COG1143">
    <property type="taxonomic scope" value="Bacteria"/>
</dbReference>
<dbReference type="HOGENOM" id="CLU_067218_5_1_6"/>
<dbReference type="OrthoDB" id="9808559at2"/>
<dbReference type="Proteomes" id="UP000002587">
    <property type="component" value="Chromosome"/>
</dbReference>
<dbReference type="GO" id="GO:0005886">
    <property type="term" value="C:plasma membrane"/>
    <property type="evidence" value="ECO:0007669"/>
    <property type="project" value="UniProtKB-SubCell"/>
</dbReference>
<dbReference type="GO" id="GO:0051539">
    <property type="term" value="F:4 iron, 4 sulfur cluster binding"/>
    <property type="evidence" value="ECO:0007669"/>
    <property type="project" value="UniProtKB-KW"/>
</dbReference>
<dbReference type="GO" id="GO:0005506">
    <property type="term" value="F:iron ion binding"/>
    <property type="evidence" value="ECO:0007669"/>
    <property type="project" value="UniProtKB-UniRule"/>
</dbReference>
<dbReference type="GO" id="GO:0050136">
    <property type="term" value="F:NADH:ubiquinone reductase (non-electrogenic) activity"/>
    <property type="evidence" value="ECO:0007669"/>
    <property type="project" value="UniProtKB-UniRule"/>
</dbReference>
<dbReference type="GO" id="GO:0048038">
    <property type="term" value="F:quinone binding"/>
    <property type="evidence" value="ECO:0007669"/>
    <property type="project" value="UniProtKB-KW"/>
</dbReference>
<dbReference type="GO" id="GO:0009060">
    <property type="term" value="P:aerobic respiration"/>
    <property type="evidence" value="ECO:0007669"/>
    <property type="project" value="TreeGrafter"/>
</dbReference>
<dbReference type="FunFam" id="3.30.70.3270:FF:000003">
    <property type="entry name" value="NADH-quinone oxidoreductase subunit I"/>
    <property type="match status" value="1"/>
</dbReference>
<dbReference type="Gene3D" id="3.30.70.3270">
    <property type="match status" value="1"/>
</dbReference>
<dbReference type="HAMAP" id="MF_01351">
    <property type="entry name" value="NDH1_NuoI"/>
    <property type="match status" value="1"/>
</dbReference>
<dbReference type="InterPro" id="IPR017896">
    <property type="entry name" value="4Fe4S_Fe-S-bd"/>
</dbReference>
<dbReference type="InterPro" id="IPR017900">
    <property type="entry name" value="4Fe4S_Fe_S_CS"/>
</dbReference>
<dbReference type="InterPro" id="IPR010226">
    <property type="entry name" value="NADH_quinone_OxRdtase_chainI"/>
</dbReference>
<dbReference type="NCBIfam" id="TIGR01971">
    <property type="entry name" value="NuoI"/>
    <property type="match status" value="1"/>
</dbReference>
<dbReference type="NCBIfam" id="NF004538">
    <property type="entry name" value="PRK05888.1-4"/>
    <property type="match status" value="1"/>
</dbReference>
<dbReference type="PANTHER" id="PTHR10849:SF20">
    <property type="entry name" value="NADH DEHYDROGENASE [UBIQUINONE] IRON-SULFUR PROTEIN 8, MITOCHONDRIAL"/>
    <property type="match status" value="1"/>
</dbReference>
<dbReference type="PANTHER" id="PTHR10849">
    <property type="entry name" value="NADH DEHYDROGENASE UBIQUINONE IRON-SULFUR PROTEIN 8, MITOCHONDRIAL"/>
    <property type="match status" value="1"/>
</dbReference>
<dbReference type="Pfam" id="PF12838">
    <property type="entry name" value="Fer4_7"/>
    <property type="match status" value="1"/>
</dbReference>
<dbReference type="SUPFAM" id="SSF54862">
    <property type="entry name" value="4Fe-4S ferredoxins"/>
    <property type="match status" value="1"/>
</dbReference>
<dbReference type="PROSITE" id="PS00198">
    <property type="entry name" value="4FE4S_FER_1"/>
    <property type="match status" value="2"/>
</dbReference>
<dbReference type="PROSITE" id="PS51379">
    <property type="entry name" value="4FE4S_FER_2"/>
    <property type="match status" value="2"/>
</dbReference>
<sequence>MIKKLSKLVKDFTLSELRTGMKITAKELVNKKITVQFPEERTPISPRFRGLHALRRYPNGEERCIACKLCEAVCPANAITIESEMRDDGTRRTIVYDIDLFKCIFCGFCEEACPVDAIVETQIFDYAFKSRQGSIMTKERLLEVGSQNEQAINQARLEDAKYK</sequence>
<accession>A1AVS0</accession>
<proteinExistence type="inferred from homology"/>
<protein>
    <recommendedName>
        <fullName evidence="1">NADH-quinone oxidoreductase subunit I</fullName>
        <ecNumber evidence="1">7.1.1.-</ecNumber>
    </recommendedName>
    <alternativeName>
        <fullName evidence="1">NADH dehydrogenase I subunit I</fullName>
    </alternativeName>
    <alternativeName>
        <fullName evidence="1">NDH-1 subunit I</fullName>
    </alternativeName>
</protein>
<keyword id="KW-0004">4Fe-4S</keyword>
<keyword id="KW-0997">Cell inner membrane</keyword>
<keyword id="KW-1003">Cell membrane</keyword>
<keyword id="KW-0408">Iron</keyword>
<keyword id="KW-0411">Iron-sulfur</keyword>
<keyword id="KW-0472">Membrane</keyword>
<keyword id="KW-0479">Metal-binding</keyword>
<keyword id="KW-0520">NAD</keyword>
<keyword id="KW-0874">Quinone</keyword>
<keyword id="KW-0677">Repeat</keyword>
<keyword id="KW-1278">Translocase</keyword>
<keyword id="KW-0830">Ubiquinone</keyword>
<name>NUOI_RUTMC</name>
<reference key="1">
    <citation type="journal article" date="2007" name="Science">
        <title>The Calyptogena magnifica chemoautotrophic symbiont genome.</title>
        <authorList>
            <person name="Newton I.L.G."/>
            <person name="Woyke T."/>
            <person name="Auchtung T.A."/>
            <person name="Dilly G.F."/>
            <person name="Dutton R.J."/>
            <person name="Fisher M.C."/>
            <person name="Fontanez K.M."/>
            <person name="Lau E."/>
            <person name="Stewart F.J."/>
            <person name="Richardson P.M."/>
            <person name="Barry K.W."/>
            <person name="Saunders E."/>
            <person name="Detter J.C."/>
            <person name="Wu D."/>
            <person name="Eisen J.A."/>
            <person name="Cavanaugh C.M."/>
        </authorList>
    </citation>
    <scope>NUCLEOTIDE SEQUENCE [LARGE SCALE GENOMIC DNA]</scope>
</reference>
<gene>
    <name evidence="1" type="primary">nuoI</name>
    <name type="ordered locus">Rmag_0245</name>
</gene>